<protein>
    <recommendedName>
        <fullName evidence="1">Protein translocase subunit SecA</fullName>
        <ecNumber evidence="1">7.4.2.8</ecNumber>
    </recommendedName>
</protein>
<feature type="chain" id="PRO_0000320782" description="Protein translocase subunit SecA">
    <location>
        <begin position="1"/>
        <end position="840"/>
    </location>
</feature>
<feature type="region of interest" description="Disordered" evidence="2">
    <location>
        <begin position="787"/>
        <end position="821"/>
    </location>
</feature>
<feature type="compositionally biased region" description="Basic and acidic residues" evidence="2">
    <location>
        <begin position="802"/>
        <end position="819"/>
    </location>
</feature>
<feature type="binding site" evidence="1">
    <location>
        <position position="85"/>
    </location>
    <ligand>
        <name>ATP</name>
        <dbReference type="ChEBI" id="CHEBI:30616"/>
    </ligand>
</feature>
<feature type="binding site" evidence="1">
    <location>
        <begin position="103"/>
        <end position="107"/>
    </location>
    <ligand>
        <name>ATP</name>
        <dbReference type="ChEBI" id="CHEBI:30616"/>
    </ligand>
</feature>
<feature type="binding site" evidence="1">
    <location>
        <position position="492"/>
    </location>
    <ligand>
        <name>ATP</name>
        <dbReference type="ChEBI" id="CHEBI:30616"/>
    </ligand>
</feature>
<feature type="binding site" evidence="1">
    <location>
        <position position="823"/>
    </location>
    <ligand>
        <name>Zn(2+)</name>
        <dbReference type="ChEBI" id="CHEBI:29105"/>
    </ligand>
</feature>
<feature type="binding site" evidence="1">
    <location>
        <position position="825"/>
    </location>
    <ligand>
        <name>Zn(2+)</name>
        <dbReference type="ChEBI" id="CHEBI:29105"/>
    </ligand>
</feature>
<feature type="binding site" evidence="1">
    <location>
        <position position="834"/>
    </location>
    <ligand>
        <name>Zn(2+)</name>
        <dbReference type="ChEBI" id="CHEBI:29105"/>
    </ligand>
</feature>
<feature type="binding site" evidence="1">
    <location>
        <position position="835"/>
    </location>
    <ligand>
        <name>Zn(2+)</name>
        <dbReference type="ChEBI" id="CHEBI:29105"/>
    </ligand>
</feature>
<accession>Q8XIF0</accession>
<organism>
    <name type="scientific">Clostridium perfringens (strain 13 / Type A)</name>
    <dbReference type="NCBI Taxonomy" id="195102"/>
    <lineage>
        <taxon>Bacteria</taxon>
        <taxon>Bacillati</taxon>
        <taxon>Bacillota</taxon>
        <taxon>Clostridia</taxon>
        <taxon>Eubacteriales</taxon>
        <taxon>Clostridiaceae</taxon>
        <taxon>Clostridium</taxon>
    </lineage>
</organism>
<comment type="function">
    <text evidence="1">Part of the Sec protein translocase complex. Interacts with the SecYEG preprotein conducting channel. Has a central role in coupling the hydrolysis of ATP to the transfer of proteins into and across the cell membrane, serving as an ATP-driven molecular motor driving the stepwise translocation of polypeptide chains across the membrane.</text>
</comment>
<comment type="catalytic activity">
    <reaction evidence="1">
        <text>ATP + H2O + cellular proteinSide 1 = ADP + phosphate + cellular proteinSide 2.</text>
        <dbReference type="EC" id="7.4.2.8"/>
    </reaction>
</comment>
<comment type="cofactor">
    <cofactor evidence="1">
        <name>Zn(2+)</name>
        <dbReference type="ChEBI" id="CHEBI:29105"/>
    </cofactor>
    <text evidence="1">May bind 1 zinc ion per subunit.</text>
</comment>
<comment type="subunit">
    <text evidence="1">Monomer and homodimer. Part of the essential Sec protein translocation apparatus which comprises SecA, SecYEG and auxiliary proteins SecDF. Other proteins may also be involved.</text>
</comment>
<comment type="subcellular location">
    <subcellularLocation>
        <location evidence="1">Cell membrane</location>
        <topology evidence="1">Peripheral membrane protein</topology>
        <orientation evidence="1">Cytoplasmic side</orientation>
    </subcellularLocation>
    <subcellularLocation>
        <location evidence="1">Cytoplasm</location>
    </subcellularLocation>
    <text evidence="1">Distribution is 50-50.</text>
</comment>
<comment type="similarity">
    <text evidence="1">Belongs to the SecA family.</text>
</comment>
<name>SECA_CLOPE</name>
<proteinExistence type="inferred from homology"/>
<evidence type="ECO:0000255" key="1">
    <source>
        <dbReference type="HAMAP-Rule" id="MF_01382"/>
    </source>
</evidence>
<evidence type="ECO:0000256" key="2">
    <source>
        <dbReference type="SAM" id="MobiDB-lite"/>
    </source>
</evidence>
<gene>
    <name evidence="1" type="primary">secA</name>
    <name type="ordered locus">CPE2171</name>
</gene>
<sequence>MGLFDKIFGSYSDREVKRITPIVDKIDSLGPEMEKLSDEELKQKTFEFKDRYAKGESLDDMLPEAFAVCREASTRVLGMKHYREQLIGGIVLHQGRIAEMKTGEGKTLVATLPVYLNAIAGKGVHVITVNDYLATRDKEWMGQLYEFLGLTTGVIVHGLTNDQRREAYNADITYGTNNEFGFDYLRDNMVIYKEERVQRPLHYCIVDEVDSILIDEARTPLIISGAGSKSTDLYKIADFFVKKLREEEDYTIDEKAHAAMLTDKGVAEAEKAFGIENYADANNMELQHHITQALKANYVMKRDKDYMVKDDEIAIVDEFTGRLMEGRRYSDGLHQAIEAKEGVKVQRESKTLATITFQNYFRMYTKLAGMTGTALTEETEFREIYGLDVVVIPTHRPVQRQDHSDLVFKTAKGKYDAIVEEIIETHKTGQPVLVGTTSIEKSEYLSSLLKKKGVPHKVLNARYHEQEAEIVSHAGELGNITIATNMAGRGTDIKLGEGVLEVGGLKIIGTERHESRRIDNQLRGRSGRQGDKGHSRFYISLEDDLMRIFGSEKLQSVVDRLGLEETEAIESKMVTKSIENAQKKVEGNNFDIRKTLLGYDDVMNKQREVIYKQRSQVLEGENLEDSVQAMIEDVITNAVQAHLGNIDEDDFEKELGDLIKYLEDIMLPHGKFTVEELKTNSNEEITRKFIECAREIYKEKEEFVGSEQMREIERVIILRVVDTKWMDHIDDMDHLKQGIGLRAYKQQDPIQAYQMEGSAMFDEMINNIKIDTVRYLFHVKVEAEKPQRERVAKETGASHGGDSQEIKKKPVKKEPKVGRNDLCPCGSGKKYKSCCGREVV</sequence>
<dbReference type="EC" id="7.4.2.8" evidence="1"/>
<dbReference type="EMBL" id="BA000016">
    <property type="protein sequence ID" value="BAB81877.1"/>
    <property type="molecule type" value="Genomic_DNA"/>
</dbReference>
<dbReference type="RefSeq" id="WP_011010802.1">
    <property type="nucleotide sequence ID" value="NC_003366.1"/>
</dbReference>
<dbReference type="SMR" id="Q8XIF0"/>
<dbReference type="STRING" id="195102.gene:10491443"/>
<dbReference type="KEGG" id="cpe:CPE2171"/>
<dbReference type="HOGENOM" id="CLU_005314_3_0_9"/>
<dbReference type="Proteomes" id="UP000000818">
    <property type="component" value="Chromosome"/>
</dbReference>
<dbReference type="GO" id="GO:0031522">
    <property type="term" value="C:cell envelope Sec protein transport complex"/>
    <property type="evidence" value="ECO:0007669"/>
    <property type="project" value="TreeGrafter"/>
</dbReference>
<dbReference type="GO" id="GO:0005829">
    <property type="term" value="C:cytosol"/>
    <property type="evidence" value="ECO:0007669"/>
    <property type="project" value="TreeGrafter"/>
</dbReference>
<dbReference type="GO" id="GO:0005886">
    <property type="term" value="C:plasma membrane"/>
    <property type="evidence" value="ECO:0007669"/>
    <property type="project" value="UniProtKB-SubCell"/>
</dbReference>
<dbReference type="GO" id="GO:0005524">
    <property type="term" value="F:ATP binding"/>
    <property type="evidence" value="ECO:0007669"/>
    <property type="project" value="UniProtKB-UniRule"/>
</dbReference>
<dbReference type="GO" id="GO:0046872">
    <property type="term" value="F:metal ion binding"/>
    <property type="evidence" value="ECO:0007669"/>
    <property type="project" value="UniProtKB-KW"/>
</dbReference>
<dbReference type="GO" id="GO:0008564">
    <property type="term" value="F:protein-exporting ATPase activity"/>
    <property type="evidence" value="ECO:0007669"/>
    <property type="project" value="UniProtKB-EC"/>
</dbReference>
<dbReference type="GO" id="GO:0065002">
    <property type="term" value="P:intracellular protein transmembrane transport"/>
    <property type="evidence" value="ECO:0007669"/>
    <property type="project" value="UniProtKB-UniRule"/>
</dbReference>
<dbReference type="GO" id="GO:0017038">
    <property type="term" value="P:protein import"/>
    <property type="evidence" value="ECO:0007669"/>
    <property type="project" value="InterPro"/>
</dbReference>
<dbReference type="GO" id="GO:0006605">
    <property type="term" value="P:protein targeting"/>
    <property type="evidence" value="ECO:0007669"/>
    <property type="project" value="UniProtKB-UniRule"/>
</dbReference>
<dbReference type="GO" id="GO:0043952">
    <property type="term" value="P:protein transport by the Sec complex"/>
    <property type="evidence" value="ECO:0007669"/>
    <property type="project" value="TreeGrafter"/>
</dbReference>
<dbReference type="CDD" id="cd17928">
    <property type="entry name" value="DEXDc_SecA"/>
    <property type="match status" value="1"/>
</dbReference>
<dbReference type="CDD" id="cd18803">
    <property type="entry name" value="SF2_C_secA"/>
    <property type="match status" value="1"/>
</dbReference>
<dbReference type="FunFam" id="1.10.3060.10:FF:000002">
    <property type="entry name" value="Preprotein translocase subunit SecA"/>
    <property type="match status" value="1"/>
</dbReference>
<dbReference type="FunFam" id="3.40.50.300:FF:000694">
    <property type="entry name" value="Preprotein translocase subunit SecA"/>
    <property type="match status" value="1"/>
</dbReference>
<dbReference type="FunFam" id="3.90.1440.10:FF:000001">
    <property type="entry name" value="Preprotein translocase subunit SecA"/>
    <property type="match status" value="1"/>
</dbReference>
<dbReference type="FunFam" id="3.40.50.300:FF:000334">
    <property type="entry name" value="Protein translocase subunit SecA"/>
    <property type="match status" value="1"/>
</dbReference>
<dbReference type="Gene3D" id="1.10.3060.10">
    <property type="entry name" value="Helical scaffold and wing domains of SecA"/>
    <property type="match status" value="1"/>
</dbReference>
<dbReference type="Gene3D" id="3.40.50.300">
    <property type="entry name" value="P-loop containing nucleotide triphosphate hydrolases"/>
    <property type="match status" value="3"/>
</dbReference>
<dbReference type="Gene3D" id="3.90.1440.10">
    <property type="entry name" value="SecA, preprotein cross-linking domain"/>
    <property type="match status" value="1"/>
</dbReference>
<dbReference type="HAMAP" id="MF_01382">
    <property type="entry name" value="SecA"/>
    <property type="match status" value="1"/>
</dbReference>
<dbReference type="InterPro" id="IPR014001">
    <property type="entry name" value="Helicase_ATP-bd"/>
</dbReference>
<dbReference type="InterPro" id="IPR001650">
    <property type="entry name" value="Helicase_C-like"/>
</dbReference>
<dbReference type="InterPro" id="IPR027417">
    <property type="entry name" value="P-loop_NTPase"/>
</dbReference>
<dbReference type="InterPro" id="IPR004027">
    <property type="entry name" value="SEC_C_motif"/>
</dbReference>
<dbReference type="InterPro" id="IPR000185">
    <property type="entry name" value="SecA"/>
</dbReference>
<dbReference type="InterPro" id="IPR020937">
    <property type="entry name" value="SecA_CS"/>
</dbReference>
<dbReference type="InterPro" id="IPR011115">
    <property type="entry name" value="SecA_DEAD"/>
</dbReference>
<dbReference type="InterPro" id="IPR014018">
    <property type="entry name" value="SecA_motor_DEAD"/>
</dbReference>
<dbReference type="InterPro" id="IPR011130">
    <property type="entry name" value="SecA_preprotein_X-link_dom"/>
</dbReference>
<dbReference type="InterPro" id="IPR044722">
    <property type="entry name" value="SecA_SF2_C"/>
</dbReference>
<dbReference type="InterPro" id="IPR011116">
    <property type="entry name" value="SecA_Wing/Scaffold"/>
</dbReference>
<dbReference type="InterPro" id="IPR036266">
    <property type="entry name" value="SecA_Wing/Scaffold_sf"/>
</dbReference>
<dbReference type="InterPro" id="IPR036670">
    <property type="entry name" value="SecA_X-link_sf"/>
</dbReference>
<dbReference type="NCBIfam" id="NF006630">
    <property type="entry name" value="PRK09200.1"/>
    <property type="match status" value="1"/>
</dbReference>
<dbReference type="NCBIfam" id="NF009538">
    <property type="entry name" value="PRK12904.1"/>
    <property type="match status" value="1"/>
</dbReference>
<dbReference type="NCBIfam" id="TIGR00963">
    <property type="entry name" value="secA"/>
    <property type="match status" value="1"/>
</dbReference>
<dbReference type="PANTHER" id="PTHR30612:SF0">
    <property type="entry name" value="CHLOROPLAST PROTEIN-TRANSPORTING ATPASE"/>
    <property type="match status" value="1"/>
</dbReference>
<dbReference type="PANTHER" id="PTHR30612">
    <property type="entry name" value="SECA INNER MEMBRANE COMPONENT OF SEC PROTEIN SECRETION SYSTEM"/>
    <property type="match status" value="1"/>
</dbReference>
<dbReference type="Pfam" id="PF21090">
    <property type="entry name" value="P-loop_SecA"/>
    <property type="match status" value="1"/>
</dbReference>
<dbReference type="Pfam" id="PF02810">
    <property type="entry name" value="SEC-C"/>
    <property type="match status" value="1"/>
</dbReference>
<dbReference type="Pfam" id="PF07517">
    <property type="entry name" value="SecA_DEAD"/>
    <property type="match status" value="1"/>
</dbReference>
<dbReference type="Pfam" id="PF01043">
    <property type="entry name" value="SecA_PP_bind"/>
    <property type="match status" value="1"/>
</dbReference>
<dbReference type="Pfam" id="PF07516">
    <property type="entry name" value="SecA_SW"/>
    <property type="match status" value="1"/>
</dbReference>
<dbReference type="PRINTS" id="PR00906">
    <property type="entry name" value="SECA"/>
</dbReference>
<dbReference type="SMART" id="SM00957">
    <property type="entry name" value="SecA_DEAD"/>
    <property type="match status" value="1"/>
</dbReference>
<dbReference type="SMART" id="SM00958">
    <property type="entry name" value="SecA_PP_bind"/>
    <property type="match status" value="1"/>
</dbReference>
<dbReference type="SUPFAM" id="SSF81886">
    <property type="entry name" value="Helical scaffold and wing domains of SecA"/>
    <property type="match status" value="1"/>
</dbReference>
<dbReference type="SUPFAM" id="SSF52540">
    <property type="entry name" value="P-loop containing nucleoside triphosphate hydrolases"/>
    <property type="match status" value="2"/>
</dbReference>
<dbReference type="SUPFAM" id="SSF81767">
    <property type="entry name" value="Pre-protein crosslinking domain of SecA"/>
    <property type="match status" value="1"/>
</dbReference>
<dbReference type="PROSITE" id="PS01312">
    <property type="entry name" value="SECA"/>
    <property type="match status" value="1"/>
</dbReference>
<dbReference type="PROSITE" id="PS51196">
    <property type="entry name" value="SECA_MOTOR_DEAD"/>
    <property type="match status" value="1"/>
</dbReference>
<reference key="1">
    <citation type="journal article" date="2002" name="Proc. Natl. Acad. Sci. U.S.A.">
        <title>Complete genome sequence of Clostridium perfringens, an anaerobic flesh-eater.</title>
        <authorList>
            <person name="Shimizu T."/>
            <person name="Ohtani K."/>
            <person name="Hirakawa H."/>
            <person name="Ohshima K."/>
            <person name="Yamashita A."/>
            <person name="Shiba T."/>
            <person name="Ogasawara N."/>
            <person name="Hattori M."/>
            <person name="Kuhara S."/>
            <person name="Hayashi H."/>
        </authorList>
    </citation>
    <scope>NUCLEOTIDE SEQUENCE [LARGE SCALE GENOMIC DNA]</scope>
    <source>
        <strain>13 / Type A</strain>
    </source>
</reference>
<keyword id="KW-0067">ATP-binding</keyword>
<keyword id="KW-1003">Cell membrane</keyword>
<keyword id="KW-0963">Cytoplasm</keyword>
<keyword id="KW-0472">Membrane</keyword>
<keyword id="KW-0479">Metal-binding</keyword>
<keyword id="KW-0547">Nucleotide-binding</keyword>
<keyword id="KW-0653">Protein transport</keyword>
<keyword id="KW-1185">Reference proteome</keyword>
<keyword id="KW-1278">Translocase</keyword>
<keyword id="KW-0811">Translocation</keyword>
<keyword id="KW-0813">Transport</keyword>
<keyword id="KW-0862">Zinc</keyword>